<protein>
    <recommendedName>
        <fullName>Putative uncharacterized protein YEL050W-A</fullName>
    </recommendedName>
</protein>
<reference key="1">
    <citation type="journal article" date="1997" name="Nature">
        <title>The nucleotide sequence of Saccharomyces cerevisiae chromosome V.</title>
        <authorList>
            <person name="Dietrich F.S."/>
            <person name="Mulligan J.T."/>
            <person name="Hennessy K.M."/>
            <person name="Yelton M.A."/>
            <person name="Allen E."/>
            <person name="Araujo R."/>
            <person name="Aviles E."/>
            <person name="Berno A."/>
            <person name="Brennan T."/>
            <person name="Carpenter J."/>
            <person name="Chen E."/>
            <person name="Cherry J.M."/>
            <person name="Chung E."/>
            <person name="Duncan M."/>
            <person name="Guzman E."/>
            <person name="Hartzell G."/>
            <person name="Hunicke-Smith S."/>
            <person name="Hyman R.W."/>
            <person name="Kayser A."/>
            <person name="Komp C."/>
            <person name="Lashkari D."/>
            <person name="Lew H."/>
            <person name="Lin D."/>
            <person name="Mosedale D."/>
            <person name="Nakahara K."/>
            <person name="Namath A."/>
            <person name="Norgren R."/>
            <person name="Oefner P."/>
            <person name="Oh C."/>
            <person name="Petel F.X."/>
            <person name="Roberts D."/>
            <person name="Sehl P."/>
            <person name="Schramm S."/>
            <person name="Shogren T."/>
            <person name="Smith V."/>
            <person name="Taylor P."/>
            <person name="Wei Y."/>
            <person name="Botstein D."/>
            <person name="Davis R.W."/>
        </authorList>
    </citation>
    <scope>NUCLEOTIDE SEQUENCE [LARGE SCALE GENOMIC DNA]</scope>
    <source>
        <strain>ATCC 204508 / S288c</strain>
    </source>
</reference>
<reference key="2">
    <citation type="journal article" date="2014" name="G3 (Bethesda)">
        <title>The reference genome sequence of Saccharomyces cerevisiae: Then and now.</title>
        <authorList>
            <person name="Engel S.R."/>
            <person name="Dietrich F.S."/>
            <person name="Fisk D.G."/>
            <person name="Binkley G."/>
            <person name="Balakrishnan R."/>
            <person name="Costanzo M.C."/>
            <person name="Dwight S.S."/>
            <person name="Hitz B.C."/>
            <person name="Karra K."/>
            <person name="Nash R.S."/>
            <person name="Weng S."/>
            <person name="Wong E.D."/>
            <person name="Lloyd P."/>
            <person name="Skrzypek M.S."/>
            <person name="Miyasato S.R."/>
            <person name="Simison M."/>
            <person name="Cherry J.M."/>
        </authorList>
    </citation>
    <scope>GENOME REANNOTATION</scope>
    <source>
        <strain>ATCC 204508 / S288c</strain>
    </source>
</reference>
<reference key="3">
    <citation type="journal article" date="2003" name="Genome Res.">
        <title>Systematic discovery of new genes in the Saccharomyces cerevisiae genome.</title>
        <authorList>
            <person name="Kessler M.M."/>
            <person name="Zeng Q."/>
            <person name="Hogan S."/>
            <person name="Cook R."/>
            <person name="Morales A.J."/>
            <person name="Cottarel G."/>
        </authorList>
    </citation>
    <scope>GENOME REANNOTATION</scope>
</reference>
<sequence length="63" mass="7510">MIVDKRHCLQAVQNYIVQINVTRTTKKRSLCCFFSTKISLFIILHLCLLVCLLLSFYFDFYPF</sequence>
<comment type="subcellular location">
    <subcellularLocation>
        <location evidence="2">Membrane</location>
        <topology evidence="2">Single-pass membrane protein</topology>
    </subcellularLocation>
</comment>
<comment type="miscellaneous">
    <text evidence="2">Partially overlaps RML2.</text>
</comment>
<comment type="caution">
    <text evidence="3">Product of a dubious gene prediction unlikely to encode a functional protein. Because of that it is not part of the S.cerevisiae S288c complete/reference proteome set.</text>
</comment>
<proteinExistence type="uncertain"/>
<gene>
    <name type="ordered locus">YEL050W-A</name>
    <name type="ORF">smORF167</name>
</gene>
<accession>P0C5M7</accession>
<feature type="chain" id="PRO_0000309025" description="Putative uncharacterized protein YEL050W-A">
    <location>
        <begin position="1"/>
        <end position="63"/>
    </location>
</feature>
<feature type="transmembrane region" description="Helical" evidence="1">
    <location>
        <begin position="38"/>
        <end position="58"/>
    </location>
</feature>
<keyword id="KW-0472">Membrane</keyword>
<keyword id="KW-0812">Transmembrane</keyword>
<keyword id="KW-1133">Transmembrane helix</keyword>
<organism>
    <name type="scientific">Saccharomyces cerevisiae (strain ATCC 204508 / S288c)</name>
    <name type="common">Baker's yeast</name>
    <dbReference type="NCBI Taxonomy" id="559292"/>
    <lineage>
        <taxon>Eukaryota</taxon>
        <taxon>Fungi</taxon>
        <taxon>Dikarya</taxon>
        <taxon>Ascomycota</taxon>
        <taxon>Saccharomycotina</taxon>
        <taxon>Saccharomycetes</taxon>
        <taxon>Saccharomycetales</taxon>
        <taxon>Saccharomycetaceae</taxon>
        <taxon>Saccharomyces</taxon>
    </lineage>
</organism>
<evidence type="ECO:0000255" key="1"/>
<evidence type="ECO:0000305" key="2"/>
<evidence type="ECO:0000305" key="3">
    <source>
    </source>
</evidence>
<name>YE050_YEAST</name>
<dbReference type="EMBL" id="U18779">
    <property type="status" value="NOT_ANNOTATED_CDS"/>
    <property type="molecule type" value="Genomic_DNA"/>
</dbReference>
<dbReference type="SMR" id="P0C5M7"/>
<dbReference type="PaxDb" id="4932-YEL050W-A"/>
<dbReference type="EnsemblFungi" id="YEL050W-A_mRNA">
    <property type="protein sequence ID" value="YEL050W-A"/>
    <property type="gene ID" value="YEL050W-A"/>
</dbReference>
<dbReference type="AGR" id="SGD:S000028545"/>
<dbReference type="SGD" id="S000028545">
    <property type="gene designation" value="YEL050W-A"/>
</dbReference>
<dbReference type="HOGENOM" id="CLU_2887549_0_0_1"/>
<dbReference type="GO" id="GO:0016020">
    <property type="term" value="C:membrane"/>
    <property type="evidence" value="ECO:0007669"/>
    <property type="project" value="UniProtKB-SubCell"/>
</dbReference>